<organism>
    <name type="scientific">Mus musculus</name>
    <name type="common">Mouse</name>
    <dbReference type="NCBI Taxonomy" id="10090"/>
    <lineage>
        <taxon>Eukaryota</taxon>
        <taxon>Metazoa</taxon>
        <taxon>Chordata</taxon>
        <taxon>Craniata</taxon>
        <taxon>Vertebrata</taxon>
        <taxon>Euteleostomi</taxon>
        <taxon>Mammalia</taxon>
        <taxon>Eutheria</taxon>
        <taxon>Euarchontoglires</taxon>
        <taxon>Glires</taxon>
        <taxon>Rodentia</taxon>
        <taxon>Myomorpha</taxon>
        <taxon>Muroidea</taxon>
        <taxon>Muridae</taxon>
        <taxon>Murinae</taxon>
        <taxon>Mus</taxon>
        <taxon>Mus</taxon>
    </lineage>
</organism>
<name>TREM2_MOUSE</name>
<sequence length="227" mass="24527">MGPLHQFLLLLITALSQALNTTVLQGMAGQSLRVSCTYDALKHWGRRKAWCRQLGEEGPCQRVVSTHGVWLLAFLKKRNGSTVIADDTLAGTVTITLKNLQAGDAGLYQCQSLRGREAEVLQKVLVEVLEDPLDDQDAGDLWVPEESSSFEGAQVEHSTSRNQETSFPPTSILLLLACVLLSKFLAASILWAVARGRQKPGTPVVRGLDCGQDAGHQLQILTGPGGT</sequence>
<comment type="function">
    <text evidence="1 3 6 7 8 9 10 11 12 13 14 16 17 19 20 21 23 24 25">Forms a receptor signaling complex with TYROBP which mediates signaling and cell activation following ligand binding (PubMed:11241283). Acts as a receptor for amyloid-beta protein 42, a cleavage product of the amyloid-beta precursor protein APP, and mediates its uptake and degradation by microglia (PubMed:27477018, PubMed:29518356). Binding to amyloid-beta 42 mediates microglial activation, proliferation, migration, apoptosis and expression of pro-inflammatory cytokines, such as IL6R and CCL3, and the anti-inflammatory cytokine ARG1 (PubMed:27477018, PubMed:29518356). Acts as a receptor for lipoprotein particles such as LDL, VLDL, and HDL and for apolipoproteins such as APOA1, APOA2, APOB, APOE, APOE2, APOE3, APOE4, and CLU and enhances their uptake in microglia (PubMed:27477018). Binds phospholipids (preferably anionic lipids) such as phosphatidylserine, phosphatidylethanolamine, phosphatidylglycerol and sphingomyelin (By similarity). Regulates microglial proliferation by acting as an upstream regulator of the Wnt/beta-catenin signaling cascade (PubMed:28077724). Required for microglial phagocytosis of apoptotic neurons (PubMed:24990881). Also required for microglial activation and phagocytosis of myelin debris after neuronal injury and of neuronal synapses during synapse elimination in the developing brain (PubMed:15728241, PubMed:25631124, PubMed:28592261, PubMed:29752066). Regulates microglial chemotaxis and process outgrowth, and also the microglial response to oxidative stress and lipopolysaccharide (PubMed:28483841, PubMed:29663649, PubMed:29859094, PubMed:30232263). It suppresses PI3K and NF-kappa-B signaling in response to lipopolysaccharide; thus promoting phagocytosis, suppressing pro-inflammatory cytokine and nitric oxide production, inhibiting apoptosis and increasing expression of IL10 and TGFB (PubMed:29663649). During oxidative stress, it promotes anti-apoptotic NF-kappa-B signaling and ERK signaling (PubMed:28592261). Plays a role in microglial MTOR activation and metabolism (PubMed:28802038). Regulates age-related changes in microglial numbers (PubMed:25631124, PubMed:29752066, PubMed:30548312). Triggers activation of the immune responses in macrophages and dendritic cells. Mediates cytokine-induced formation of multinucleated giant cells which are formed by the fusion of macrophages (PubMed:18957693). In dendritic cells, receptor of SEMA6D with PLEXNA1 as coreceptor and mediates up-regulation of chemokine receptor CCR7 and dendritic cell maturation and survival (PubMed:16715077). Involved in the positive regulation of osteoclast differentiation (PubMed:16418779).</text>
</comment>
<comment type="subunit">
    <text evidence="1 3 8 19">Monomer (By similarity). After ectodomain shedding, the extracellular domain oligomerizes, which is enhanced and stabilized by binding of phosphatidylserine (By similarity). Interacts with TYROBP/DAP12 (PubMed:11241283, PubMed:16715077, PubMed:29518356). Interaction with TYROBP is required for stabilization of the TREM2 C-terminal fragment (TREM2-CTF) which is produced by proteolytic processing (By similarity). Interacts with PLXNA1 (via TIG domains); the interaction mediates SEMA6D binding and signaling through TYROBP (PubMed:16715077).</text>
</comment>
<comment type="interaction">
    <interactant intactId="EBI-15982016">
        <id>Q99NH8</id>
    </interactant>
    <interactant intactId="EBI-771260">
        <id>P70206</id>
        <label>Plxna1</label>
    </interactant>
    <organismsDiffer>false</organismsDiffer>
    <experiments>4</experiments>
</comment>
<comment type="interaction">
    <interactant intactId="EBI-15982016">
        <id>Q99NH8</id>
    </interactant>
    <interactant intactId="EBI-821758">
        <id>PRO_0000000092</id>
        <label>APP</label>
        <dbReference type="UniProtKB" id="P05067"/>
    </interactant>
    <organismsDiffer>true</organismsDiffer>
    <experiments>2</experiments>
</comment>
<comment type="subcellular location">
    <molecule>Isoform 1</molecule>
    <subcellularLocation>
        <location evidence="8 10">Cell membrane</location>
        <topology evidence="2">Single-pass type I membrane protein</topology>
    </subcellularLocation>
</comment>
<comment type="subcellular location">
    <molecule>Isoform 2</molecule>
    <subcellularLocation>
        <location evidence="27">Secreted</location>
    </subcellularLocation>
</comment>
<comment type="alternative products">
    <event type="alternative splicing"/>
    <isoform>
        <id>Q99NH8-1</id>
        <name>1</name>
        <sequence type="displayed"/>
    </isoform>
    <isoform>
        <id>Q99NH8-2</id>
        <name>2</name>
        <name>svTREM-2b</name>
        <sequence type="described" ref="VSP_010794"/>
    </isoform>
</comment>
<comment type="tissue specificity">
    <text evidence="3 4 6 12 13 15 16 17 18 21 22">Expressed in the brain, specifically in microglia (at protein level) (PubMed:15728241, PubMed:27477018, PubMed:28077724, PubMed:28559417, PubMed:28592261, PubMed:28802038, PubMed:28855301, PubMed:29752066, PubMed:29794134). Expressed in macrophages (at protein level) (PubMed:11241283, PubMed:28559417, PubMed:28802038). Expressed at higher levels in the CNS, heart and lung than in lymph nodes or in other non-lymphoid tissues such as kidney, liver and testis (PubMed:12472885). In the CNS not all microglia express TREM2 (PubMed:12472885). Brain regions with an incomplete blood-brain barrier had the lowest percentages of TREM2 expressing microglia, whereas the lateral entorhinal and cingulate cortex had the highest percentages (PubMed:12472885).</text>
</comment>
<comment type="induction">
    <text evidence="16">Expression is increased during oxygen-glucose deprivation, reaching the highest expression level 12 hours after reoxygenation. Expression is also increased by ischemia, where maximum expression is reached 7 days after ischemic conditions.</text>
</comment>
<comment type="PTM">
    <text evidence="10 18">Undergoes ectodomain shedding through proteolytic cleavage by ADAM10 and ADAM17 to produce a transmembrane segment, the TREM2 C-terminal fragment (TREM2-CTF), which is subsequently cleaved by gamma-secretase.</text>
</comment>
<comment type="disruption phenotype">
    <text evidence="11 21 25">Mice exhibit a strong increase in self-grooming behavior, defective social behavior, and some sensorimotor defects (PubMed:25631124, PubMed:29752066). Aged mice show decreases in age-related neuronal loss and increases in synaptic density in the substantia nigra and the hippocampus (PubMed:30548312). They also exhibit a decrease in the connectivity between the retrosplenial cortices, subiculum, hippocampus and anterior cingulate, as a result of defective synaptic growth thus impairing their function (PubMed:29752066).</text>
</comment>
<comment type="sequence caution" evidence="27">
    <conflict type="frameshift">
        <sequence resource="EMBL-CDS" id="AAF69825"/>
    </conflict>
</comment>
<protein>
    <recommendedName>
        <fullName>Triggering receptor expressed on myeloid cells 2</fullName>
        <shortName>TREM-2</shortName>
    </recommendedName>
    <alternativeName>
        <fullName>Triggering receptor expressed on monocytes 2</fullName>
    </alternativeName>
</protein>
<feature type="signal peptide" evidence="2">
    <location>
        <begin position="1"/>
        <end position="18"/>
    </location>
</feature>
<feature type="chain" id="PRO_0000014988" description="Triggering receptor expressed on myeloid cells 2">
    <location>
        <begin position="19"/>
        <end position="227"/>
    </location>
</feature>
<feature type="topological domain" description="Extracellular" evidence="2">
    <location>
        <begin position="19"/>
        <end position="171"/>
    </location>
</feature>
<feature type="transmembrane region" description="Helical" evidence="2">
    <location>
        <begin position="172"/>
        <end position="192"/>
    </location>
</feature>
<feature type="topological domain" description="Cytoplasmic" evidence="2">
    <location>
        <begin position="193"/>
        <end position="227"/>
    </location>
</feature>
<feature type="domain" description="Ig-like V-type">
    <location>
        <begin position="29"/>
        <end position="112"/>
    </location>
</feature>
<feature type="binding site" evidence="1">
    <location>
        <position position="67"/>
    </location>
    <ligand>
        <name>a 1,2-diacyl-sn-glycero-3-phospho-L-serine</name>
        <dbReference type="ChEBI" id="CHEBI:57262"/>
    </ligand>
</feature>
<feature type="binding site" evidence="1">
    <location>
        <position position="88"/>
    </location>
    <ligand>
        <name>a 1,2-diacyl-sn-glycero-3-phospho-L-serine</name>
        <dbReference type="ChEBI" id="CHEBI:57262"/>
    </ligand>
</feature>
<feature type="site" description="Cleavage of ectodomain" evidence="18">
    <location>
        <begin position="157"/>
        <end position="158"/>
    </location>
</feature>
<feature type="glycosylation site" description="N-linked (GlcNAc...) asparagine" evidence="2">
    <location>
        <position position="20"/>
    </location>
</feature>
<feature type="glycosylation site" description="N-linked (GlcNAc...) asparagine" evidence="1">
    <location>
        <position position="79"/>
    </location>
</feature>
<feature type="disulfide bond" evidence="1">
    <location>
        <begin position="36"/>
        <end position="110"/>
    </location>
</feature>
<feature type="disulfide bond" evidence="1">
    <location>
        <begin position="51"/>
        <end position="60"/>
    </location>
</feature>
<feature type="splice variant" id="VSP_010794" description="In isoform 2." evidence="26">
    <original>NQETSFPPTSILLLLACVLLSKFLAASILWAVARGRQKPGTPVVRGLDCGQDAGHQLQILTGPGGT</original>
    <variation>QVSSCGSPLAYHLPPLSKESRDLLPTHLHSSPPGLRSPEQVSCSQHPLGCGQGQAEAGNTCGQRAGLWPRCWAPTSDPHWTRRYVREF</variation>
    <location>
        <begin position="162"/>
        <end position="227"/>
    </location>
</feature>
<feature type="sequence variant" description="In strain: FVB/N." evidence="5">
    <original>R</original>
    <variation>W</variation>
    <location>
        <position position="78"/>
    </location>
</feature>
<feature type="mutagenesis site" description="Decreases myeloid cell immune response. Reduces expression levels." evidence="22 23">
    <original>R</original>
    <variation>H</variation>
    <location>
        <position position="47"/>
    </location>
</feature>
<feature type="mutagenesis site" description="Macrophages exhibit increased apoptosis, reduced proliferation, and reduced phagocytosis. Macrophages also exhibit increased inflammatory cytokine secretion. Microglia demonstrate reduced immune activity. Also decreases cerebral blood flow and reduces cerebral glucose metabolism." evidence="15">
    <original>T</original>
    <variation>M</variation>
    <location>
        <position position="66"/>
    </location>
</feature>
<feature type="sequence conflict" description="In Ref. 2; AAK01465 and 5; AAH32959." evidence="27" ref="2 5">
    <original>A</original>
    <variation>S</variation>
    <location>
        <position position="105"/>
    </location>
</feature>
<feature type="sequence conflict" description="In Ref. 1; AAF69825." evidence="27" ref="1">
    <original>A</original>
    <variation>R</variation>
    <location>
        <position position="118"/>
    </location>
</feature>
<feature type="sequence conflict" description="In Ref. 2; AAK01465 and 5; AAH32959." evidence="27" ref="2 5">
    <original>Q</original>
    <variation>K</variation>
    <location>
        <position position="122"/>
    </location>
</feature>
<feature type="sequence conflict" description="In Ref. 2; AAK01465 and 5; AAH32959." evidence="27" ref="2 5">
    <original>S</original>
    <variation>E</variation>
    <location>
        <position position="148"/>
    </location>
</feature>
<evidence type="ECO:0000250" key="1">
    <source>
        <dbReference type="UniProtKB" id="Q9NZC2"/>
    </source>
</evidence>
<evidence type="ECO:0000255" key="2"/>
<evidence type="ECO:0000269" key="3">
    <source>
    </source>
</evidence>
<evidence type="ECO:0000269" key="4">
    <source>
    </source>
</evidence>
<evidence type="ECO:0000269" key="5">
    <source>
    </source>
</evidence>
<evidence type="ECO:0000269" key="6">
    <source>
    </source>
</evidence>
<evidence type="ECO:0000269" key="7">
    <source>
    </source>
</evidence>
<evidence type="ECO:0000269" key="8">
    <source>
    </source>
</evidence>
<evidence type="ECO:0000269" key="9">
    <source>
    </source>
</evidence>
<evidence type="ECO:0000269" key="10">
    <source>
    </source>
</evidence>
<evidence type="ECO:0000269" key="11">
    <source>
    </source>
</evidence>
<evidence type="ECO:0000269" key="12">
    <source>
    </source>
</evidence>
<evidence type="ECO:0000269" key="13">
    <source>
    </source>
</evidence>
<evidence type="ECO:0000269" key="14">
    <source>
    </source>
</evidence>
<evidence type="ECO:0000269" key="15">
    <source>
    </source>
</evidence>
<evidence type="ECO:0000269" key="16">
    <source>
    </source>
</evidence>
<evidence type="ECO:0000269" key="17">
    <source>
    </source>
</evidence>
<evidence type="ECO:0000269" key="18">
    <source>
    </source>
</evidence>
<evidence type="ECO:0000269" key="19">
    <source>
    </source>
</evidence>
<evidence type="ECO:0000269" key="20">
    <source>
    </source>
</evidence>
<evidence type="ECO:0000269" key="21">
    <source>
    </source>
</evidence>
<evidence type="ECO:0000269" key="22">
    <source>
    </source>
</evidence>
<evidence type="ECO:0000269" key="23">
    <source>
    </source>
</evidence>
<evidence type="ECO:0000269" key="24">
    <source>
    </source>
</evidence>
<evidence type="ECO:0000269" key="25">
    <source>
    </source>
</evidence>
<evidence type="ECO:0000303" key="26">
    <source>
    </source>
</evidence>
<evidence type="ECO:0000305" key="27"/>
<accession>Q99NH8</accession>
<accession>Q8CGK4</accession>
<accession>Q8CIA6</accession>
<accession>Q99NH9</accession>
<accession>Q9JL34</accession>
<reference key="1">
    <citation type="journal article" date="2000" name="J. Immunol.">
        <title>Inflammatory responses can be triggered by TREM-1, a novel receptor expressed on neutrophils and monocytes.</title>
        <authorList>
            <person name="Bouchon A."/>
            <person name="Dietrich J."/>
            <person name="Colonna M."/>
        </authorList>
    </citation>
    <scope>NUCLEOTIDE SEQUENCE [MRNA] (ISOFORM 1)</scope>
</reference>
<reference key="2">
    <citation type="journal article" date="2001" name="Eur. J. Immunol.">
        <title>Cloning and characterization of a novel mouse myeloid DAP12-associated receptor family.</title>
        <authorList>
            <person name="Daws M.R."/>
            <person name="Lanier L.L."/>
            <person name="Seaman W.E."/>
            <person name="Ryan J.C."/>
        </authorList>
    </citation>
    <scope>NUCLEOTIDE SEQUENCE [MRNA] (ISOFORM 1)</scope>
    <scope>FUNCTION</scope>
    <scope>TISSUE SPECIFICITY</scope>
    <scope>INTERACTION WITH TYROBP/DAP12</scope>
    <source>
        <strain>BALB/cJ</strain>
        <tissue>Macrophage</tissue>
    </source>
</reference>
<reference key="3">
    <citation type="journal article" date="2002" name="J. Neurochem.">
        <title>Heterogeneous expression of the triggering receptor expressed on myeloid cells-2 on adult murine microglia.</title>
        <authorList>
            <person name="Schmid C.D."/>
            <person name="Sautkulis L.N."/>
            <person name="Danielson P.E."/>
            <person name="Cooper J."/>
            <person name="Hasel K.W."/>
            <person name="Hilbush B.S."/>
            <person name="Sutcliffe J.G."/>
            <person name="Carson M.J."/>
        </authorList>
    </citation>
    <scope>NUCLEOTIDE SEQUENCE [MRNA] (ISOFORMS 1 AND 2)</scope>
    <scope>TISSUE SPECIFICITY</scope>
    <source>
        <strain>C57BL/6J</strain>
        <tissue>Brain</tissue>
    </source>
</reference>
<reference key="4">
    <citation type="journal article" date="2005" name="Science">
        <title>The transcriptional landscape of the mammalian genome.</title>
        <authorList>
            <person name="Carninci P."/>
            <person name="Kasukawa T."/>
            <person name="Katayama S."/>
            <person name="Gough J."/>
            <person name="Frith M.C."/>
            <person name="Maeda N."/>
            <person name="Oyama R."/>
            <person name="Ravasi T."/>
            <person name="Lenhard B."/>
            <person name="Wells C."/>
            <person name="Kodzius R."/>
            <person name="Shimokawa K."/>
            <person name="Bajic V.B."/>
            <person name="Brenner S.E."/>
            <person name="Batalov S."/>
            <person name="Forrest A.R."/>
            <person name="Zavolan M."/>
            <person name="Davis M.J."/>
            <person name="Wilming L.G."/>
            <person name="Aidinis V."/>
            <person name="Allen J.E."/>
            <person name="Ambesi-Impiombato A."/>
            <person name="Apweiler R."/>
            <person name="Aturaliya R.N."/>
            <person name="Bailey T.L."/>
            <person name="Bansal M."/>
            <person name="Baxter L."/>
            <person name="Beisel K.W."/>
            <person name="Bersano T."/>
            <person name="Bono H."/>
            <person name="Chalk A.M."/>
            <person name="Chiu K.P."/>
            <person name="Choudhary V."/>
            <person name="Christoffels A."/>
            <person name="Clutterbuck D.R."/>
            <person name="Crowe M.L."/>
            <person name="Dalla E."/>
            <person name="Dalrymple B.P."/>
            <person name="de Bono B."/>
            <person name="Della Gatta G."/>
            <person name="di Bernardo D."/>
            <person name="Down T."/>
            <person name="Engstrom P."/>
            <person name="Fagiolini M."/>
            <person name="Faulkner G."/>
            <person name="Fletcher C.F."/>
            <person name="Fukushima T."/>
            <person name="Furuno M."/>
            <person name="Futaki S."/>
            <person name="Gariboldi M."/>
            <person name="Georgii-Hemming P."/>
            <person name="Gingeras T.R."/>
            <person name="Gojobori T."/>
            <person name="Green R.E."/>
            <person name="Gustincich S."/>
            <person name="Harbers M."/>
            <person name="Hayashi Y."/>
            <person name="Hensch T.K."/>
            <person name="Hirokawa N."/>
            <person name="Hill D."/>
            <person name="Huminiecki L."/>
            <person name="Iacono M."/>
            <person name="Ikeo K."/>
            <person name="Iwama A."/>
            <person name="Ishikawa T."/>
            <person name="Jakt M."/>
            <person name="Kanapin A."/>
            <person name="Katoh M."/>
            <person name="Kawasawa Y."/>
            <person name="Kelso J."/>
            <person name="Kitamura H."/>
            <person name="Kitano H."/>
            <person name="Kollias G."/>
            <person name="Krishnan S.P."/>
            <person name="Kruger A."/>
            <person name="Kummerfeld S.K."/>
            <person name="Kurochkin I.V."/>
            <person name="Lareau L.F."/>
            <person name="Lazarevic D."/>
            <person name="Lipovich L."/>
            <person name="Liu J."/>
            <person name="Liuni S."/>
            <person name="McWilliam S."/>
            <person name="Madan Babu M."/>
            <person name="Madera M."/>
            <person name="Marchionni L."/>
            <person name="Matsuda H."/>
            <person name="Matsuzawa S."/>
            <person name="Miki H."/>
            <person name="Mignone F."/>
            <person name="Miyake S."/>
            <person name="Morris K."/>
            <person name="Mottagui-Tabar S."/>
            <person name="Mulder N."/>
            <person name="Nakano N."/>
            <person name="Nakauchi H."/>
            <person name="Ng P."/>
            <person name="Nilsson R."/>
            <person name="Nishiguchi S."/>
            <person name="Nishikawa S."/>
            <person name="Nori F."/>
            <person name="Ohara O."/>
            <person name="Okazaki Y."/>
            <person name="Orlando V."/>
            <person name="Pang K.C."/>
            <person name="Pavan W.J."/>
            <person name="Pavesi G."/>
            <person name="Pesole G."/>
            <person name="Petrovsky N."/>
            <person name="Piazza S."/>
            <person name="Reed J."/>
            <person name="Reid J.F."/>
            <person name="Ring B.Z."/>
            <person name="Ringwald M."/>
            <person name="Rost B."/>
            <person name="Ruan Y."/>
            <person name="Salzberg S.L."/>
            <person name="Sandelin A."/>
            <person name="Schneider C."/>
            <person name="Schoenbach C."/>
            <person name="Sekiguchi K."/>
            <person name="Semple C.A."/>
            <person name="Seno S."/>
            <person name="Sessa L."/>
            <person name="Sheng Y."/>
            <person name="Shibata Y."/>
            <person name="Shimada H."/>
            <person name="Shimada K."/>
            <person name="Silva D."/>
            <person name="Sinclair B."/>
            <person name="Sperling S."/>
            <person name="Stupka E."/>
            <person name="Sugiura K."/>
            <person name="Sultana R."/>
            <person name="Takenaka Y."/>
            <person name="Taki K."/>
            <person name="Tammoja K."/>
            <person name="Tan S.L."/>
            <person name="Tang S."/>
            <person name="Taylor M.S."/>
            <person name="Tegner J."/>
            <person name="Teichmann S.A."/>
            <person name="Ueda H.R."/>
            <person name="van Nimwegen E."/>
            <person name="Verardo R."/>
            <person name="Wei C.L."/>
            <person name="Yagi K."/>
            <person name="Yamanishi H."/>
            <person name="Zabarovsky E."/>
            <person name="Zhu S."/>
            <person name="Zimmer A."/>
            <person name="Hide W."/>
            <person name="Bult C."/>
            <person name="Grimmond S.M."/>
            <person name="Teasdale R.D."/>
            <person name="Liu E.T."/>
            <person name="Brusic V."/>
            <person name="Quackenbush J."/>
            <person name="Wahlestedt C."/>
            <person name="Mattick J.S."/>
            <person name="Hume D.A."/>
            <person name="Kai C."/>
            <person name="Sasaki D."/>
            <person name="Tomaru Y."/>
            <person name="Fukuda S."/>
            <person name="Kanamori-Katayama M."/>
            <person name="Suzuki M."/>
            <person name="Aoki J."/>
            <person name="Arakawa T."/>
            <person name="Iida J."/>
            <person name="Imamura K."/>
            <person name="Itoh M."/>
            <person name="Kato T."/>
            <person name="Kawaji H."/>
            <person name="Kawagashira N."/>
            <person name="Kawashima T."/>
            <person name="Kojima M."/>
            <person name="Kondo S."/>
            <person name="Konno H."/>
            <person name="Nakano K."/>
            <person name="Ninomiya N."/>
            <person name="Nishio T."/>
            <person name="Okada M."/>
            <person name="Plessy C."/>
            <person name="Shibata K."/>
            <person name="Shiraki T."/>
            <person name="Suzuki S."/>
            <person name="Tagami M."/>
            <person name="Waki K."/>
            <person name="Watahiki A."/>
            <person name="Okamura-Oho Y."/>
            <person name="Suzuki H."/>
            <person name="Kawai J."/>
            <person name="Hayashizaki Y."/>
        </authorList>
    </citation>
    <scope>NUCLEOTIDE SEQUENCE [LARGE SCALE MRNA] (ISOFORM 1)</scope>
    <source>
        <strain>C57BL/6J</strain>
        <tissue>Spinal cord</tissue>
    </source>
</reference>
<reference key="5">
    <citation type="journal article" date="2004" name="Genome Res.">
        <title>The status, quality, and expansion of the NIH full-length cDNA project: the Mammalian Gene Collection (MGC).</title>
        <authorList>
            <consortium name="The MGC Project Team"/>
        </authorList>
    </citation>
    <scope>NUCLEOTIDE SEQUENCE [LARGE SCALE MRNA] (ISOFORM 1)</scope>
    <scope>VARIANT TRP-78</scope>
    <source>
        <strain>Czech II</strain>
        <strain>FVB/N</strain>
        <tissue>Lung</tissue>
        <tissue>Mammary gland</tissue>
    </source>
</reference>
<reference key="6">
    <citation type="journal article" date="2005" name="J. Exp. Med.">
        <title>Clearance of apoptotic neurons without inflammation by microglial triggering receptor expressed on myeloid cells-2.</title>
        <authorList>
            <person name="Takahashi K."/>
            <person name="Rochford C.D."/>
            <person name="Neumann H."/>
        </authorList>
    </citation>
    <scope>FUNCTION</scope>
    <scope>TISSUE SPECIFICITY</scope>
</reference>
<reference key="7">
    <citation type="journal article" date="2006" name="J. Bone Miner. Res.">
        <title>TREM2, a DAP12-associated receptor, regulates osteoclast differentiation and function.</title>
        <authorList>
            <person name="Humphrey M.B."/>
            <person name="Daws M.R."/>
            <person name="Spusta S.C."/>
            <person name="Niemi E.C."/>
            <person name="Torchia J.A."/>
            <person name="Lanier L.L."/>
            <person name="Seaman W.E."/>
            <person name="Nakamura M.C."/>
        </authorList>
    </citation>
    <scope>FUNCTION</scope>
</reference>
<reference key="8">
    <citation type="journal article" date="2006" name="Nat. Cell Biol.">
        <title>Plexin-A1 and its interaction with DAP12 in immune responses and bone homeostasis.</title>
        <authorList>
            <person name="Takegahara N."/>
            <person name="Takamatsu H."/>
            <person name="Toyofuku T."/>
            <person name="Tsujimura T."/>
            <person name="Okuno T."/>
            <person name="Yukawa K."/>
            <person name="Mizui M."/>
            <person name="Yamamoto M."/>
            <person name="Prasad D.V."/>
            <person name="Suzuki K."/>
            <person name="Ishii M."/>
            <person name="Terai K."/>
            <person name="Moriya M."/>
            <person name="Nakatsuji Y."/>
            <person name="Sakoda S."/>
            <person name="Sato S."/>
            <person name="Akira S."/>
            <person name="Takeda K."/>
            <person name="Inui M."/>
            <person name="Takai T."/>
            <person name="Ikawa M."/>
            <person name="Okabe M."/>
            <person name="Kumanogoh A."/>
            <person name="Kikutani H."/>
        </authorList>
    </citation>
    <scope>FUNCTION</scope>
    <scope>INTERACTION WITH PLXNA1 AND TYROBP</scope>
    <scope>SUBCELLULAR LOCATION</scope>
</reference>
<reference key="9">
    <citation type="journal article" date="2008" name="Sci. Signal.">
        <title>Essential role of DAP12 signaling in macrophage programming into a fusion-competent state.</title>
        <authorList>
            <person name="Helming L."/>
            <person name="Tomasello E."/>
            <person name="Kyriakides T.R."/>
            <person name="Martinez F.O."/>
            <person name="Takai T."/>
            <person name="Gordon S."/>
            <person name="Vivier E."/>
        </authorList>
    </citation>
    <scope>FUNCTION</scope>
</reference>
<reference key="10">
    <citation type="journal article" date="2014" name="Sci. Transl. Med.">
        <title>TREM2 mutations implicated in neurodegeneration impair cell surface transport and phagocytosis.</title>
        <authorList>
            <person name="Kleinberger G."/>
            <person name="Yamanishi Y."/>
            <person name="Suarez-Calvet M."/>
            <person name="Czirr E."/>
            <person name="Lohmann E."/>
            <person name="Cuyvers E."/>
            <person name="Struyfs H."/>
            <person name="Pettkus N."/>
            <person name="Wenninger-Weinzierl A."/>
            <person name="Mazaheri F."/>
            <person name="Tahirovic S."/>
            <person name="Lleo A."/>
            <person name="Alcolea D."/>
            <person name="Fortea J."/>
            <person name="Willem M."/>
            <person name="Lammich S."/>
            <person name="Molinuevo J.L."/>
            <person name="Sanchez-Valle R."/>
            <person name="Antonell A."/>
            <person name="Ramirez A."/>
            <person name="Heneka M.T."/>
            <person name="Sleegers K."/>
            <person name="van der Zee J."/>
            <person name="Martin J.J."/>
            <person name="Engelborghs S."/>
            <person name="Demirtas-Tatlidede A."/>
            <person name="Zetterberg H."/>
            <person name="Van Broeckhoven C."/>
            <person name="Gurvit H."/>
            <person name="Wyss-Coray T."/>
            <person name="Hardy J."/>
            <person name="Colonna M."/>
            <person name="Haass C."/>
        </authorList>
    </citation>
    <scope>FUNCTION</scope>
    <scope>SUBCELLULAR LOCATION</scope>
    <scope>PROTEOLYTIC PROCESSING</scope>
</reference>
<reference key="11">
    <citation type="journal article" date="2015" name="Acta Neuropathol.">
        <title>TREM2 regulates microglial cell activation in response to demyelination in vivo.</title>
        <authorList>
            <person name="Cantoni C."/>
            <person name="Bollman B."/>
            <person name="Licastro D."/>
            <person name="Xie M."/>
            <person name="Mikesell R."/>
            <person name="Schmidt R."/>
            <person name="Yuede C.M."/>
            <person name="Galimberti D."/>
            <person name="Olivecrona G."/>
            <person name="Klein R.S."/>
            <person name="Cross A.H."/>
            <person name="Otero K."/>
            <person name="Piccio L."/>
        </authorList>
    </citation>
    <scope>FUNCTION</scope>
    <scope>DISRUPTION PHENOTYPE</scope>
</reference>
<reference key="12">
    <citation type="journal article" date="2016" name="Neuron">
        <title>TREM2 Binds to Apolipoproteins, Including APOE and CLU/APOJ, and Thereby Facilitates Uptake of Amyloid-Beta by Microglia.</title>
        <authorList>
            <person name="Yeh F.L."/>
            <person name="Wang Y."/>
            <person name="Tom I."/>
            <person name="Gonzalez L.C."/>
            <person name="Sheng M."/>
        </authorList>
    </citation>
    <scope>FUNCTION</scope>
    <scope>TISSUE SPECIFICITY</scope>
</reference>
<reference key="13">
    <citation type="journal article" date="2017" name="Cell">
        <title>TREM2 Maintains Microglial Metabolic Fitness in Alzheimer's Disease.</title>
        <authorList>
            <person name="Ulland T.K."/>
            <person name="Song W.M."/>
            <person name="Huang S.C."/>
            <person name="Ulrich J.D."/>
            <person name="Sergushichev A."/>
            <person name="Beatty W.L."/>
            <person name="Loboda A.A."/>
            <person name="Zhou Y."/>
            <person name="Cairns N.J."/>
            <person name="Kambal A."/>
            <person name="Loginicheva E."/>
            <person name="Gilfillan S."/>
            <person name="Cella M."/>
            <person name="Virgin H.W."/>
            <person name="Unanue E.R."/>
            <person name="Wang Y."/>
            <person name="Artyomov M.N."/>
            <person name="Holtzman D.M."/>
            <person name="Colonna M."/>
        </authorList>
    </citation>
    <scope>FUNCTION</scope>
    <scope>TISSUE SPECIFICITY</scope>
</reference>
<reference key="14">
    <citation type="journal article" date="2017" name="EMBO J.">
        <title>The FTD-like syndrome causing TREM2 T66M mutation impairs microglia function, brain perfusion, and glucose metabolism.</title>
        <authorList>
            <person name="Kleinberger G."/>
            <person name="Brendel M."/>
            <person name="Mracsko E."/>
            <person name="Wefers B."/>
            <person name="Groeneweg L."/>
            <person name="Xiang X."/>
            <person name="Focke C."/>
            <person name="Deussing M."/>
            <person name="Suarez-Calvet M."/>
            <person name="Mazaheri F."/>
            <person name="Parhizkar S."/>
            <person name="Pettkus N."/>
            <person name="Wurst W."/>
            <person name="Feederle R."/>
            <person name="Bartenstein P."/>
            <person name="Mueggler T."/>
            <person name="Arzberger T."/>
            <person name="Knuesel I."/>
            <person name="Rominger A."/>
            <person name="Haass C."/>
        </authorList>
    </citation>
    <scope>FUNCTION</scope>
    <scope>TISSUE SPECIFICITY</scope>
    <scope>MUTAGENESIS OF THR-66</scope>
</reference>
<reference key="15">
    <citation type="journal article" date="2017" name="EMBO Mol. Med.">
        <title>TREM2 shedding by cleavage at the H157-S158 bond is accelerated for the Alzheimer's disease-associated H157Y variant.</title>
        <authorList>
            <person name="Thornton P."/>
            <person name="Sevalle J."/>
            <person name="Deery M.J."/>
            <person name="Fraser G."/>
            <person name="Zhou Y."/>
            <person name="Staahl S."/>
            <person name="Franssen E.H."/>
            <person name="Dodd R.B."/>
            <person name="Qamar S."/>
            <person name="Gomez Perez-Nievas B."/>
            <person name="Nicol L.S."/>
            <person name="Eketjaell S."/>
            <person name="Revell J."/>
            <person name="Jones C."/>
            <person name="Billinton A."/>
            <person name="St George-Hyslop P.H."/>
            <person name="Chessell I."/>
            <person name="Crowther D.C."/>
        </authorList>
    </citation>
    <scope>TISSUE SPECIFICITY</scope>
    <scope>PROTEOLYTIC PROCESSING</scope>
</reference>
<reference key="16">
    <citation type="journal article" date="2017" name="EMBO Rep.">
        <title>TREM2 deficiency impairs chemotaxis and microglial responses to neuronal injury.</title>
        <authorList>
            <person name="Mazaheri F."/>
            <person name="Snaidero N."/>
            <person name="Kleinberger G."/>
            <person name="Madore C."/>
            <person name="Daria A."/>
            <person name="Werner G."/>
            <person name="Krasemann S."/>
            <person name="Capell A."/>
            <person name="Truembach D."/>
            <person name="Wurst W."/>
            <person name="Brunner B."/>
            <person name="Bultmann S."/>
            <person name="Tahirovic S."/>
            <person name="Kerschensteiner M."/>
            <person name="Misgeld T."/>
            <person name="Butovsky O."/>
            <person name="Haass C."/>
        </authorList>
    </citation>
    <scope>FUNCTION</scope>
</reference>
<reference key="17">
    <citation type="journal article" date="2017" name="J. Neurosci.">
        <title>TREM2 Promotes Microglial Survival by Activating Wnt/beta-Catenin Pathway.</title>
        <authorList>
            <person name="Zheng H."/>
            <person name="Jia L."/>
            <person name="Liu C.C."/>
            <person name="Rong Z."/>
            <person name="Zhong L."/>
            <person name="Yang L."/>
            <person name="Chen X.F."/>
            <person name="Fryer J.D."/>
            <person name="Wang X."/>
            <person name="Zhang Y.W."/>
            <person name="Xu H."/>
            <person name="Bu G."/>
        </authorList>
    </citation>
    <scope>FUNCTION</scope>
    <scope>TISSUE SPECIFICITY</scope>
</reference>
<reference key="18">
    <citation type="journal article" date="2017" name="Mol. Brain">
        <title>TREM2 protects against cerebral ischemia/reperfusion injury.</title>
        <authorList>
            <person name="Wu R."/>
            <person name="Li X."/>
            <person name="Xu P."/>
            <person name="Huang L."/>
            <person name="Cheng J."/>
            <person name="Huang X."/>
            <person name="Jiang J."/>
            <person name="Wu L.J."/>
            <person name="Tang Y."/>
        </authorList>
    </citation>
    <scope>FUNCTION</scope>
    <scope>TISSUE SPECIFICITY</scope>
    <scope>INDUCTION BY OXYGEN-GLUCOSE DEPRIVATION AND ISCHEMIA</scope>
</reference>
<reference key="19">
    <citation type="journal article" date="2018" name="Immunity">
        <title>The Microglial Innate Immune Receptor TREM2 Is Required for Synapse Elimination and Normal Brain Connectivity.</title>
        <authorList>
            <person name="Filipello F."/>
            <person name="Morini R."/>
            <person name="Corradini I."/>
            <person name="Zerbi V."/>
            <person name="Canzi A."/>
            <person name="Michalski B."/>
            <person name="Erreni M."/>
            <person name="Markicevic M."/>
            <person name="Starvaggi-Cucuzza C."/>
            <person name="Otero K."/>
            <person name="Piccio L."/>
            <person name="Cignarella F."/>
            <person name="Perrucci F."/>
            <person name="Tamborini M."/>
            <person name="Genua M."/>
            <person name="Rajendran L."/>
            <person name="Menna E."/>
            <person name="Vetrano S."/>
            <person name="Fahnestock M."/>
            <person name="Paolicelli R.C."/>
            <person name="Matteoli M."/>
        </authorList>
    </citation>
    <scope>FUNCTION</scope>
    <scope>TISSUE SPECIFICITY</scope>
    <scope>DISRUPTION PHENOTYPE</scope>
</reference>
<reference key="20">
    <citation type="journal article" date="2018" name="J. Biol. Chem.">
        <title>Molecular basis for the loss-of-function effects of the Alzheimer's disease-associated R47H variant of the immune receptor TREM2.</title>
        <authorList>
            <person name="Sudom A."/>
            <person name="Talreja S."/>
            <person name="Danao J."/>
            <person name="Bragg E."/>
            <person name="Kegel R."/>
            <person name="Min X."/>
            <person name="Richardson J."/>
            <person name="Zhang Z."/>
            <person name="Sharkov N."/>
            <person name="Marcora E."/>
            <person name="Thibault S."/>
            <person name="Bradley J."/>
            <person name="Wood S."/>
            <person name="Lim A.C."/>
            <person name="Chen H."/>
            <person name="Wang S."/>
            <person name="Foltz I.N."/>
            <person name="Sambashivan S."/>
            <person name="Wang Z."/>
        </authorList>
    </citation>
    <scope>TISSUE SPECIFICITY</scope>
    <scope>MUTAGENESIS OF ARG-47</scope>
</reference>
<reference key="21">
    <citation type="journal article" date="2018" name="Mol. Neurodegener.">
        <title>The Trem2 R47H variant confers loss-of-function-like phenotypes in Alzheimer's disease.</title>
        <authorList>
            <person name="Cheng-Hathaway P.J."/>
            <person name="Reed-Geaghan E.G."/>
            <person name="Jay T.R."/>
            <person name="Casali B.T."/>
            <person name="Bemiller S.M."/>
            <person name="Puntambekar S.S."/>
            <person name="von Saucken V.E."/>
            <person name="Williams R.Y."/>
            <person name="Karlo J.C."/>
            <person name="Moutinho M."/>
            <person name="Xu G."/>
            <person name="Ransohoff R.M."/>
            <person name="Lamb B.T."/>
            <person name="Landreth G.E."/>
        </authorList>
    </citation>
    <scope>FUNCTION</scope>
    <scope>MUTAGENESIS OF ARG-47</scope>
</reference>
<reference key="22">
    <citation type="journal article" date="2018" name="Neuron">
        <title>TREM2 Is a Receptor for beta-Amyloid that Mediates Microglial Function.</title>
        <authorList>
            <person name="Zhao Y."/>
            <person name="Wu X."/>
            <person name="Li X."/>
            <person name="Jiang L.L."/>
            <person name="Gui X."/>
            <person name="Liu Y."/>
            <person name="Sun Y."/>
            <person name="Zhu B."/>
            <person name="Pina-Crespo J.C."/>
            <person name="Zhang M."/>
            <person name="Zhang N."/>
            <person name="Chen X."/>
            <person name="Bu G."/>
            <person name="An Z."/>
            <person name="Huang T.Y."/>
            <person name="Xu H."/>
        </authorList>
    </citation>
    <scope>FUNCTION</scope>
    <scope>INTERACTION WITH TYROBP</scope>
</reference>
<reference key="23">
    <citation type="journal article" date="2018" name="Proc. Natl. Acad. Sci. U.S.A.">
        <title>Differential effects of partial and complete loss of TREM2 on microglial injury response and tauopathy.</title>
        <authorList>
            <person name="Sayed F.A."/>
            <person name="Telpoukhovskaia M."/>
            <person name="Kodama L."/>
            <person name="Li Y."/>
            <person name="Zhou Y."/>
            <person name="Le D."/>
            <person name="Hauduc A."/>
            <person name="Ludwig C."/>
            <person name="Gao F."/>
            <person name="Clelland C."/>
            <person name="Zhan L."/>
            <person name="Cooper Y.A."/>
            <person name="Davalos D."/>
            <person name="Akassoglou K."/>
            <person name="Coppola G."/>
            <person name="Gan L."/>
        </authorList>
    </citation>
    <scope>FUNCTION</scope>
</reference>
<reference key="24">
    <citation type="journal article" date="2019" name="Cell Biol. Int.">
        <title>TREM2 inhibits inflammatory responses in mouse microglia by suppressing the PI3K/NF-kappaB signaling.</title>
        <authorList>
            <person name="Li C."/>
            <person name="Zhao B."/>
            <person name="Lin C."/>
            <person name="Gong Z."/>
            <person name="An X."/>
        </authorList>
    </citation>
    <scope>FUNCTION</scope>
</reference>
<reference key="25">
    <citation type="journal article" date="2019" name="Glia">
        <title>TREM2 triggers microglial density and age-related neuronal loss.</title>
        <authorList>
            <person name="Linnartz-Gerlach B."/>
            <person name="Bodea L.G."/>
            <person name="Klaus C."/>
            <person name="Ginolhac A."/>
            <person name="Halder R."/>
            <person name="Sinkkonen L."/>
            <person name="Walter J."/>
            <person name="Colonna M."/>
            <person name="Neumann H."/>
        </authorList>
    </citation>
    <scope>FUNCTION</scope>
    <scope>DISRUPTION PHENOTYPE</scope>
</reference>
<dbReference type="EMBL" id="AF213458">
    <property type="protein sequence ID" value="AAF69825.1"/>
    <property type="status" value="ALT_FRAME"/>
    <property type="molecule type" value="mRNA"/>
</dbReference>
<dbReference type="EMBL" id="AY024348">
    <property type="protein sequence ID" value="AAK01465.1"/>
    <property type="molecule type" value="mRNA"/>
</dbReference>
<dbReference type="EMBL" id="AY024349">
    <property type="protein sequence ID" value="AAK01466.1"/>
    <property type="molecule type" value="mRNA"/>
</dbReference>
<dbReference type="EMBL" id="AY187009">
    <property type="protein sequence ID" value="AAO06114.1"/>
    <property type="molecule type" value="mRNA"/>
</dbReference>
<dbReference type="EMBL" id="AK039477">
    <property type="protein sequence ID" value="BAC30362.1"/>
    <property type="molecule type" value="mRNA"/>
</dbReference>
<dbReference type="EMBL" id="BC032959">
    <property type="protein sequence ID" value="AAH32959.1"/>
    <property type="molecule type" value="mRNA"/>
</dbReference>
<dbReference type="EMBL" id="BC033485">
    <property type="protein sequence ID" value="AAH33485.1"/>
    <property type="molecule type" value="mRNA"/>
</dbReference>
<dbReference type="EMBL" id="BC052784">
    <property type="protein sequence ID" value="AAH52784.1"/>
    <property type="molecule type" value="mRNA"/>
</dbReference>
<dbReference type="CCDS" id="CCDS28865.1">
    <molecule id="Q99NH8-1"/>
</dbReference>
<dbReference type="CCDS" id="CCDS70825.1">
    <molecule id="Q99NH8-2"/>
</dbReference>
<dbReference type="RefSeq" id="NP_001259007.1">
    <molecule id="Q99NH8-2"/>
    <property type="nucleotide sequence ID" value="NM_001272078.2"/>
</dbReference>
<dbReference type="RefSeq" id="NP_112544.1">
    <molecule id="Q99NH8-1"/>
    <property type="nucleotide sequence ID" value="NM_031254.4"/>
</dbReference>
<dbReference type="SMR" id="Q99NH8"/>
<dbReference type="DIP" id="DIP-59896N"/>
<dbReference type="FunCoup" id="Q99NH8">
    <property type="interactions" value="637"/>
</dbReference>
<dbReference type="IntAct" id="Q99NH8">
    <property type="interactions" value="3"/>
</dbReference>
<dbReference type="STRING" id="10090.ENSMUSP00000108863"/>
<dbReference type="GlyCosmos" id="Q99NH8">
    <property type="glycosylation" value="2 sites, No reported glycans"/>
</dbReference>
<dbReference type="GlyGen" id="Q99NH8">
    <property type="glycosylation" value="2 sites"/>
</dbReference>
<dbReference type="iPTMnet" id="Q99NH8"/>
<dbReference type="PhosphoSitePlus" id="Q99NH8"/>
<dbReference type="PaxDb" id="10090-ENSMUSP00000024791"/>
<dbReference type="PeptideAtlas" id="Q99NH8"/>
<dbReference type="ProteomicsDB" id="298212">
    <molecule id="Q99NH8-1"/>
</dbReference>
<dbReference type="ProteomicsDB" id="298213">
    <molecule id="Q99NH8-2"/>
</dbReference>
<dbReference type="Antibodypedia" id="2280">
    <property type="antibodies" value="735 antibodies from 39 providers"/>
</dbReference>
<dbReference type="DNASU" id="83433"/>
<dbReference type="Ensembl" id="ENSMUST00000024791.15">
    <molecule id="Q99NH8-1"/>
    <property type="protein sequence ID" value="ENSMUSP00000024791.9"/>
    <property type="gene ID" value="ENSMUSG00000023992.15"/>
</dbReference>
<dbReference type="Ensembl" id="ENSMUST00000113237.4">
    <molecule id="Q99NH8-2"/>
    <property type="protein sequence ID" value="ENSMUSP00000108863.4"/>
    <property type="gene ID" value="ENSMUSG00000023992.15"/>
</dbReference>
<dbReference type="GeneID" id="83433"/>
<dbReference type="KEGG" id="mmu:83433"/>
<dbReference type="UCSC" id="uc008cxj.2">
    <molecule id="Q99NH8-1"/>
    <property type="organism name" value="mouse"/>
</dbReference>
<dbReference type="UCSC" id="uc008cxk.2">
    <molecule id="Q99NH8-2"/>
    <property type="organism name" value="mouse"/>
</dbReference>
<dbReference type="AGR" id="MGI:1913150"/>
<dbReference type="CTD" id="54209"/>
<dbReference type="MGI" id="MGI:1913150">
    <property type="gene designation" value="Trem2"/>
</dbReference>
<dbReference type="VEuPathDB" id="HostDB:ENSMUSG00000023992"/>
<dbReference type="eggNOG" id="ENOG502S4HV">
    <property type="taxonomic scope" value="Eukaryota"/>
</dbReference>
<dbReference type="GeneTree" id="ENSGT00470000042297"/>
<dbReference type="HOGENOM" id="CLU_076120_0_0_1"/>
<dbReference type="InParanoid" id="Q99NH8"/>
<dbReference type="OMA" id="CAPSFRH"/>
<dbReference type="OrthoDB" id="67570at9989"/>
<dbReference type="PhylomeDB" id="Q99NH8"/>
<dbReference type="TreeFam" id="TF334441"/>
<dbReference type="Reactome" id="R-MMU-198933">
    <property type="pathway name" value="Immunoregulatory interactions between a Lymphoid and a non-Lymphoid cell"/>
</dbReference>
<dbReference type="Reactome" id="R-MMU-2172127">
    <property type="pathway name" value="DAP12 interactions"/>
</dbReference>
<dbReference type="Reactome" id="R-MMU-2424491">
    <property type="pathway name" value="DAP12 signaling"/>
</dbReference>
<dbReference type="Reactome" id="R-MMU-416700">
    <property type="pathway name" value="Other semaphorin interactions"/>
</dbReference>
<dbReference type="BioGRID-ORCS" id="83433">
    <property type="hits" value="5 hits in 79 CRISPR screens"/>
</dbReference>
<dbReference type="PRO" id="PR:Q99NH8"/>
<dbReference type="Proteomes" id="UP000000589">
    <property type="component" value="Chromosome 17"/>
</dbReference>
<dbReference type="RNAct" id="Q99NH8">
    <property type="molecule type" value="protein"/>
</dbReference>
<dbReference type="Bgee" id="ENSMUSG00000023992">
    <property type="expression patterns" value="Expressed in white adipose tissue and 71 other cell types or tissues"/>
</dbReference>
<dbReference type="GO" id="GO:0005576">
    <property type="term" value="C:extracellular region"/>
    <property type="evidence" value="ECO:0007669"/>
    <property type="project" value="UniProtKB-SubCell"/>
</dbReference>
<dbReference type="GO" id="GO:0005886">
    <property type="term" value="C:plasma membrane"/>
    <property type="evidence" value="ECO:0000314"/>
    <property type="project" value="UniProtKB"/>
</dbReference>
<dbReference type="GO" id="GO:0044853">
    <property type="term" value="C:plasma membrane raft"/>
    <property type="evidence" value="ECO:0007669"/>
    <property type="project" value="Ensembl"/>
</dbReference>
<dbReference type="GO" id="GO:0001540">
    <property type="term" value="F:amyloid-beta binding"/>
    <property type="evidence" value="ECO:0007669"/>
    <property type="project" value="Ensembl"/>
</dbReference>
<dbReference type="GO" id="GO:0034186">
    <property type="term" value="F:apolipoprotein A-I binding"/>
    <property type="evidence" value="ECO:0007669"/>
    <property type="project" value="Ensembl"/>
</dbReference>
<dbReference type="GO" id="GO:0008013">
    <property type="term" value="F:beta-catenin binding"/>
    <property type="evidence" value="ECO:0007669"/>
    <property type="project" value="Ensembl"/>
</dbReference>
<dbReference type="GO" id="GO:0008035">
    <property type="term" value="F:high-density lipoprotein particle binding"/>
    <property type="evidence" value="ECO:0007669"/>
    <property type="project" value="Ensembl"/>
</dbReference>
<dbReference type="GO" id="GO:0019209">
    <property type="term" value="F:kinase activator activity"/>
    <property type="evidence" value="ECO:0000250"/>
    <property type="project" value="ARUK-UCL"/>
</dbReference>
<dbReference type="GO" id="GO:0001530">
    <property type="term" value="F:lipopolysaccharide binding"/>
    <property type="evidence" value="ECO:0000314"/>
    <property type="project" value="BHF-UCL"/>
</dbReference>
<dbReference type="GO" id="GO:0070891">
    <property type="term" value="F:lipoteichoic acid binding"/>
    <property type="evidence" value="ECO:0000314"/>
    <property type="project" value="BHF-UCL"/>
</dbReference>
<dbReference type="GO" id="GO:0030169">
    <property type="term" value="F:low-density lipoprotein particle binding"/>
    <property type="evidence" value="ECO:0007669"/>
    <property type="project" value="Ensembl"/>
</dbReference>
<dbReference type="GO" id="GO:0042834">
    <property type="term" value="F:peptidoglycan binding"/>
    <property type="evidence" value="ECO:0000314"/>
    <property type="project" value="BHF-UCL"/>
</dbReference>
<dbReference type="GO" id="GO:0008429">
    <property type="term" value="F:phosphatidylethanolamine binding"/>
    <property type="evidence" value="ECO:0007669"/>
    <property type="project" value="Ensembl"/>
</dbReference>
<dbReference type="GO" id="GO:0001786">
    <property type="term" value="F:phosphatidylserine binding"/>
    <property type="evidence" value="ECO:0000250"/>
    <property type="project" value="ARUK-UCL"/>
</dbReference>
<dbReference type="GO" id="GO:0005543">
    <property type="term" value="F:phospholipid binding"/>
    <property type="evidence" value="ECO:0000250"/>
    <property type="project" value="UniProtKB"/>
</dbReference>
<dbReference type="GO" id="GO:1990782">
    <property type="term" value="F:protein tyrosine kinase binding"/>
    <property type="evidence" value="ECO:0000353"/>
    <property type="project" value="ARUK-UCL"/>
</dbReference>
<dbReference type="GO" id="GO:0097110">
    <property type="term" value="F:scaffold protein binding"/>
    <property type="evidence" value="ECO:0007669"/>
    <property type="project" value="Ensembl"/>
</dbReference>
<dbReference type="GO" id="GO:0017154">
    <property type="term" value="F:semaphorin receptor activity"/>
    <property type="evidence" value="ECO:0000314"/>
    <property type="project" value="UniProtKB"/>
</dbReference>
<dbReference type="GO" id="GO:0030215">
    <property type="term" value="F:semaphorin receptor binding"/>
    <property type="evidence" value="ECO:0000353"/>
    <property type="project" value="UniProtKB"/>
</dbReference>
<dbReference type="GO" id="GO:0038023">
    <property type="term" value="F:signaling receptor activity"/>
    <property type="evidence" value="ECO:0000315"/>
    <property type="project" value="ARUK-UCL"/>
</dbReference>
<dbReference type="GO" id="GO:0120146">
    <property type="term" value="F:sulfatide binding"/>
    <property type="evidence" value="ECO:0000250"/>
    <property type="project" value="ARUK-UCL"/>
</dbReference>
<dbReference type="GO" id="GO:0004888">
    <property type="term" value="F:transmembrane signaling receptor activity"/>
    <property type="evidence" value="ECO:0000250"/>
    <property type="project" value="MGI"/>
</dbReference>
<dbReference type="GO" id="GO:0034189">
    <property type="term" value="F:very-low-density lipoprotein particle binding"/>
    <property type="evidence" value="ECO:0007669"/>
    <property type="project" value="Ensembl"/>
</dbReference>
<dbReference type="GO" id="GO:0097242">
    <property type="term" value="P:amyloid-beta clearance"/>
    <property type="evidence" value="ECO:0000315"/>
    <property type="project" value="UniProtKB"/>
</dbReference>
<dbReference type="GO" id="GO:0150094">
    <property type="term" value="P:amyloid-beta clearance by cellular catabolic process"/>
    <property type="evidence" value="ECO:0000315"/>
    <property type="project" value="ARUK-UCL"/>
</dbReference>
<dbReference type="GO" id="GO:0043277">
    <property type="term" value="P:apoptotic cell clearance"/>
    <property type="evidence" value="ECO:0000315"/>
    <property type="project" value="UniProtKB"/>
</dbReference>
<dbReference type="GO" id="GO:0048143">
    <property type="term" value="P:astrocyte activation"/>
    <property type="evidence" value="ECO:0000316"/>
    <property type="project" value="ARUK-UCL"/>
</dbReference>
<dbReference type="GO" id="GO:1904646">
    <property type="term" value="P:cellular response to amyloid-beta"/>
    <property type="evidence" value="ECO:0000316"/>
    <property type="project" value="ARUK-UCL"/>
</dbReference>
<dbReference type="GO" id="GO:0071223">
    <property type="term" value="P:cellular response to lipoteichoic acid"/>
    <property type="evidence" value="ECO:0000314"/>
    <property type="project" value="BHF-UCL"/>
</dbReference>
<dbReference type="GO" id="GO:0140052">
    <property type="term" value="P:cellular response to oxidised low-density lipoprotein particle stimulus"/>
    <property type="evidence" value="ECO:0007669"/>
    <property type="project" value="Ensembl"/>
</dbReference>
<dbReference type="GO" id="GO:0071224">
    <property type="term" value="P:cellular response to peptidoglycan"/>
    <property type="evidence" value="ECO:0000314"/>
    <property type="project" value="BHF-UCL"/>
</dbReference>
<dbReference type="GO" id="GO:0150062">
    <property type="term" value="P:complement-mediated synapse pruning"/>
    <property type="evidence" value="ECO:0000315"/>
    <property type="project" value="UniProtKB"/>
</dbReference>
<dbReference type="GO" id="GO:0038160">
    <property type="term" value="P:CXCL12-activated CXCR4 signaling pathway"/>
    <property type="evidence" value="ECO:0000250"/>
    <property type="project" value="ARUK-UCL"/>
</dbReference>
<dbReference type="GO" id="GO:0042742">
    <property type="term" value="P:defense response to bacterium"/>
    <property type="evidence" value="ECO:0000315"/>
    <property type="project" value="UniProtKB"/>
</dbReference>
<dbReference type="GO" id="GO:0050829">
    <property type="term" value="P:defense response to Gram-negative bacterium"/>
    <property type="evidence" value="ECO:0000315"/>
    <property type="project" value="ARUK-UCL"/>
</dbReference>
<dbReference type="GO" id="GO:0097028">
    <property type="term" value="P:dendritic cell differentiation"/>
    <property type="evidence" value="ECO:0007669"/>
    <property type="project" value="Ensembl"/>
</dbReference>
<dbReference type="GO" id="GO:0097062">
    <property type="term" value="P:dendritic spine maintenance"/>
    <property type="evidence" value="ECO:0000315"/>
    <property type="project" value="ARUK-UCL"/>
</dbReference>
<dbReference type="GO" id="GO:0032497">
    <property type="term" value="P:detection of lipopolysaccharide"/>
    <property type="evidence" value="ECO:0000314"/>
    <property type="project" value="BHF-UCL"/>
</dbReference>
<dbReference type="GO" id="GO:0070392">
    <property type="term" value="P:detection of lipoteichoic acid"/>
    <property type="evidence" value="ECO:0000314"/>
    <property type="project" value="BHF-UCL"/>
</dbReference>
<dbReference type="GO" id="GO:0032499">
    <property type="term" value="P:detection of peptidoglycan"/>
    <property type="evidence" value="ECO:0000314"/>
    <property type="project" value="BHF-UCL"/>
</dbReference>
<dbReference type="GO" id="GO:1905805">
    <property type="term" value="P:excitatory synapse pruning"/>
    <property type="evidence" value="ECO:0000315"/>
    <property type="project" value="ARUK-UCL"/>
</dbReference>
<dbReference type="GO" id="GO:0098657">
    <property type="term" value="P:import into cell"/>
    <property type="evidence" value="ECO:0000316"/>
    <property type="project" value="ARUK-UCL"/>
</dbReference>
<dbReference type="GO" id="GO:0045087">
    <property type="term" value="P:innate immune response"/>
    <property type="evidence" value="ECO:0000305"/>
    <property type="project" value="BHF-UCL"/>
</dbReference>
<dbReference type="GO" id="GO:0055088">
    <property type="term" value="P:lipid homeostasis"/>
    <property type="evidence" value="ECO:0000315"/>
    <property type="project" value="ARUK-UCL"/>
</dbReference>
<dbReference type="GO" id="GO:0031663">
    <property type="term" value="P:lipopolysaccharide-mediated signaling pathway"/>
    <property type="evidence" value="ECO:0000305"/>
    <property type="project" value="BHF-UCL"/>
</dbReference>
<dbReference type="GO" id="GO:0007613">
    <property type="term" value="P:memory"/>
    <property type="evidence" value="ECO:0007669"/>
    <property type="project" value="Ensembl"/>
</dbReference>
<dbReference type="GO" id="GO:0001774">
    <property type="term" value="P:microglial cell activation"/>
    <property type="evidence" value="ECO:0000315"/>
    <property type="project" value="UniProtKB"/>
</dbReference>
<dbReference type="GO" id="GO:0002282">
    <property type="term" value="P:microglial cell activation involved in immune response"/>
    <property type="evidence" value="ECO:0000315"/>
    <property type="project" value="UniProtKB"/>
</dbReference>
<dbReference type="GO" id="GO:0061518">
    <property type="term" value="P:microglial cell proliferation"/>
    <property type="evidence" value="ECO:0000315"/>
    <property type="project" value="UniProtKB"/>
</dbReference>
<dbReference type="GO" id="GO:1905907">
    <property type="term" value="P:negative regulation of amyloid fibril formation"/>
    <property type="evidence" value="ECO:0000315"/>
    <property type="project" value="ARUK-UCL"/>
</dbReference>
<dbReference type="GO" id="GO:0043066">
    <property type="term" value="P:negative regulation of apoptotic process"/>
    <property type="evidence" value="ECO:0000315"/>
    <property type="project" value="UniProtKB"/>
</dbReference>
<dbReference type="GO" id="GO:0061889">
    <property type="term" value="P:negative regulation of astrocyte activation"/>
    <property type="evidence" value="ECO:0000314"/>
    <property type="project" value="ARUK-UCL"/>
</dbReference>
<dbReference type="GO" id="GO:1904093">
    <property type="term" value="P:negative regulation of autophagic cell death"/>
    <property type="evidence" value="ECO:0000316"/>
    <property type="project" value="ARUK-UCL"/>
</dbReference>
<dbReference type="GO" id="GO:0010507">
    <property type="term" value="P:negative regulation of autophagy"/>
    <property type="evidence" value="ECO:0000315"/>
    <property type="project" value="ARUK-UCL"/>
</dbReference>
<dbReference type="GO" id="GO:0043124">
    <property type="term" value="P:negative regulation of canonical NF-kappaB signal transduction"/>
    <property type="evidence" value="ECO:0000315"/>
    <property type="project" value="ARUK-UCL"/>
</dbReference>
<dbReference type="GO" id="GO:0050866">
    <property type="term" value="P:negative regulation of cell activation"/>
    <property type="evidence" value="ECO:0000314"/>
    <property type="project" value="ARUK-UCL"/>
</dbReference>
<dbReference type="GO" id="GO:0010887">
    <property type="term" value="P:negative regulation of cholesterol storage"/>
    <property type="evidence" value="ECO:0000315"/>
    <property type="project" value="ARUK-UCL"/>
</dbReference>
<dbReference type="GO" id="GO:1900016">
    <property type="term" value="P:negative regulation of cytokine production involved in inflammatory response"/>
    <property type="evidence" value="ECO:0000315"/>
    <property type="project" value="ARUK-UCL"/>
</dbReference>
<dbReference type="GO" id="GO:0070345">
    <property type="term" value="P:negative regulation of fat cell proliferation"/>
    <property type="evidence" value="ECO:0000315"/>
    <property type="project" value="ARUK-UCL"/>
</dbReference>
<dbReference type="GO" id="GO:0034351">
    <property type="term" value="P:negative regulation of glial cell apoptotic process"/>
    <property type="evidence" value="ECO:0000315"/>
    <property type="project" value="ARUK-UCL"/>
</dbReference>
<dbReference type="GO" id="GO:0002862">
    <property type="term" value="P:negative regulation of inflammatory response to antigenic stimulus"/>
    <property type="evidence" value="ECO:0000315"/>
    <property type="project" value="ARUK-UCL"/>
</dbReference>
<dbReference type="GO" id="GO:0032691">
    <property type="term" value="P:negative regulation of interleukin-1 beta production"/>
    <property type="evidence" value="ECO:0000315"/>
    <property type="project" value="UniProtKB"/>
</dbReference>
<dbReference type="GO" id="GO:1902227">
    <property type="term" value="P:negative regulation of macrophage colony-stimulating factor signaling pathway"/>
    <property type="evidence" value="ECO:0000250"/>
    <property type="project" value="ARUK-UCL"/>
</dbReference>
<dbReference type="GO" id="GO:0150079">
    <property type="term" value="P:negative regulation of neuroinflammatory response"/>
    <property type="evidence" value="ECO:0000314"/>
    <property type="project" value="ARUK-UCL"/>
</dbReference>
<dbReference type="GO" id="GO:1900226">
    <property type="term" value="P:negative regulation of NLRP3 inflammasome complex assembly"/>
    <property type="evidence" value="ECO:0000315"/>
    <property type="project" value="ARUK-UCL"/>
</dbReference>
<dbReference type="GO" id="GO:1903753">
    <property type="term" value="P:negative regulation of p38MAPK cascade"/>
    <property type="evidence" value="ECO:0000315"/>
    <property type="project" value="ARUK-UCL"/>
</dbReference>
<dbReference type="GO" id="GO:0051898">
    <property type="term" value="P:negative regulation of phosphatidylinositol 3-kinase/protein kinase B signal transduction"/>
    <property type="evidence" value="ECO:0000315"/>
    <property type="project" value="ARUK-UCL"/>
</dbReference>
<dbReference type="GO" id="GO:0034136">
    <property type="term" value="P:negative regulation of toll-like receptor 2 signaling pathway"/>
    <property type="evidence" value="ECO:0000315"/>
    <property type="project" value="ARUK-UCL"/>
</dbReference>
<dbReference type="GO" id="GO:0034144">
    <property type="term" value="P:negative regulation of toll-like receptor 4 signaling pathway"/>
    <property type="evidence" value="ECO:0000314"/>
    <property type="project" value="ARUK-UCL"/>
</dbReference>
<dbReference type="GO" id="GO:0010891">
    <property type="term" value="P:negative regulation of triglyceride storage"/>
    <property type="evidence" value="ECO:0000315"/>
    <property type="project" value="ARUK-UCL"/>
</dbReference>
<dbReference type="GO" id="GO:0032720">
    <property type="term" value="P:negative regulation of tumor necrosis factor production"/>
    <property type="evidence" value="ECO:0000315"/>
    <property type="project" value="UniProtKB"/>
</dbReference>
<dbReference type="GO" id="GO:0150076">
    <property type="term" value="P:neuroinflammatory response"/>
    <property type="evidence" value="ECO:0000315"/>
    <property type="project" value="UniProtKB"/>
</dbReference>
<dbReference type="GO" id="GO:0030316">
    <property type="term" value="P:osteoclast differentiation"/>
    <property type="evidence" value="ECO:0000266"/>
    <property type="project" value="MGI"/>
</dbReference>
<dbReference type="GO" id="GO:0006911">
    <property type="term" value="P:phagocytosis, engulfment"/>
    <property type="evidence" value="ECO:0000314"/>
    <property type="project" value="MGI"/>
</dbReference>
<dbReference type="GO" id="GO:0006910">
    <property type="term" value="P:phagocytosis, recognition"/>
    <property type="evidence" value="ECO:0007669"/>
    <property type="project" value="Ensembl"/>
</dbReference>
<dbReference type="GO" id="GO:1900223">
    <property type="term" value="P:positive regulation of amyloid-beta clearance"/>
    <property type="evidence" value="ECO:0000315"/>
    <property type="project" value="ARUK-UCL"/>
</dbReference>
<dbReference type="GO" id="GO:0002588">
    <property type="term" value="P:positive regulation of antigen processing and presentation of peptide antigen via MHC class II"/>
    <property type="evidence" value="ECO:0007669"/>
    <property type="project" value="Ensembl"/>
</dbReference>
<dbReference type="GO" id="GO:2001171">
    <property type="term" value="P:positive regulation of ATP biosynthetic process"/>
    <property type="evidence" value="ECO:0000315"/>
    <property type="project" value="ARUK-UCL"/>
</dbReference>
<dbReference type="GO" id="GO:1903082">
    <property type="term" value="P:positive regulation of C-C chemokine receptor CCR7 signaling pathway"/>
    <property type="evidence" value="ECO:0007669"/>
    <property type="project" value="Ensembl"/>
</dbReference>
<dbReference type="GO" id="GO:1905291">
    <property type="term" value="P:positive regulation of CAMKK-AMPK signaling cascade"/>
    <property type="evidence" value="ECO:0000316"/>
    <property type="project" value="ARUK-UCL"/>
</dbReference>
<dbReference type="GO" id="GO:2000350">
    <property type="term" value="P:positive regulation of CD40 signaling pathway"/>
    <property type="evidence" value="ECO:0007669"/>
    <property type="project" value="Ensembl"/>
</dbReference>
<dbReference type="GO" id="GO:0050921">
    <property type="term" value="P:positive regulation of chemotaxis"/>
    <property type="evidence" value="ECO:0000316"/>
    <property type="project" value="ARUK-UCL"/>
</dbReference>
<dbReference type="GO" id="GO:0010875">
    <property type="term" value="P:positive regulation of cholesterol efflux"/>
    <property type="evidence" value="ECO:0000315"/>
    <property type="project" value="ARUK-UCL"/>
</dbReference>
<dbReference type="GO" id="GO:0045960">
    <property type="term" value="P:positive regulation of complement activation, classical pathway"/>
    <property type="evidence" value="ECO:0000315"/>
    <property type="project" value="ARUK-UCL"/>
</dbReference>
<dbReference type="GO" id="GO:1901076">
    <property type="term" value="P:positive regulation of engulfment of apoptotic cell"/>
    <property type="evidence" value="ECO:0007669"/>
    <property type="project" value="Ensembl"/>
</dbReference>
<dbReference type="GO" id="GO:0070374">
    <property type="term" value="P:positive regulation of ERK1 and ERK2 cascade"/>
    <property type="evidence" value="ECO:0000315"/>
    <property type="project" value="UniProtKB"/>
</dbReference>
<dbReference type="GO" id="GO:1904951">
    <property type="term" value="P:positive regulation of establishment of protein localization"/>
    <property type="evidence" value="ECO:0000315"/>
    <property type="project" value="ARUK-UCL"/>
</dbReference>
<dbReference type="GO" id="GO:0010628">
    <property type="term" value="P:positive regulation of gene expression"/>
    <property type="evidence" value="ECO:0000316"/>
    <property type="project" value="ARUK-UCL"/>
</dbReference>
<dbReference type="GO" id="GO:0010983">
    <property type="term" value="P:positive regulation of high-density lipoprotein particle clearance"/>
    <property type="evidence" value="ECO:0000315"/>
    <property type="project" value="ARUK-UCL"/>
</dbReference>
<dbReference type="GO" id="GO:0032733">
    <property type="term" value="P:positive regulation of interleukin-10 production"/>
    <property type="evidence" value="ECO:0000315"/>
    <property type="project" value="UniProtKB"/>
</dbReference>
<dbReference type="GO" id="GO:1902533">
    <property type="term" value="P:positive regulation of intracellular signal transduction"/>
    <property type="evidence" value="ECO:0000316"/>
    <property type="project" value="ARUK-UCL"/>
</dbReference>
<dbReference type="GO" id="GO:1905581">
    <property type="term" value="P:positive regulation of low-density lipoprotein particle clearance"/>
    <property type="evidence" value="ECO:0000315"/>
    <property type="project" value="ARUK-UCL"/>
</dbReference>
<dbReference type="GO" id="GO:0034241">
    <property type="term" value="P:positive regulation of macrophage fusion"/>
    <property type="evidence" value="ECO:0000315"/>
    <property type="project" value="UniProtKB"/>
</dbReference>
<dbReference type="GO" id="GO:1903980">
    <property type="term" value="P:positive regulation of microglial cell activation"/>
    <property type="evidence" value="ECO:0000314"/>
    <property type="project" value="ARUK-UCL"/>
</dbReference>
<dbReference type="GO" id="GO:1904141">
    <property type="term" value="P:positive regulation of microglial cell migration"/>
    <property type="evidence" value="ECO:0000315"/>
    <property type="project" value="UniProtKB"/>
</dbReference>
<dbReference type="GO" id="GO:0150078">
    <property type="term" value="P:positive regulation of neuroinflammatory response"/>
    <property type="evidence" value="ECO:0000315"/>
    <property type="project" value="UniProtKB"/>
</dbReference>
<dbReference type="GO" id="GO:1901224">
    <property type="term" value="P:positive regulation of non-canonical NF-kappaB signal transduction"/>
    <property type="evidence" value="ECO:0000315"/>
    <property type="project" value="UniProtKB"/>
</dbReference>
<dbReference type="GO" id="GO:0045672">
    <property type="term" value="P:positive regulation of osteoclast differentiation"/>
    <property type="evidence" value="ECO:0000315"/>
    <property type="project" value="UniProtKB"/>
</dbReference>
<dbReference type="GO" id="GO:0050766">
    <property type="term" value="P:positive regulation of phagocytosis"/>
    <property type="evidence" value="ECO:0000315"/>
    <property type="project" value="ARUK-UCL"/>
</dbReference>
<dbReference type="GO" id="GO:0060100">
    <property type="term" value="P:positive regulation of phagocytosis, engulfment"/>
    <property type="evidence" value="ECO:0000315"/>
    <property type="project" value="UniProtKB"/>
</dbReference>
<dbReference type="GO" id="GO:0051897">
    <property type="term" value="P:positive regulation of phosphatidylinositol 3-kinase/protein kinase B signal transduction"/>
    <property type="evidence" value="ECO:0000315"/>
    <property type="project" value="ARUK-UCL"/>
</dbReference>
<dbReference type="GO" id="GO:0043268">
    <property type="term" value="P:positive regulation of potassium ion transport"/>
    <property type="evidence" value="ECO:0000315"/>
    <property type="project" value="ARUK-UCL"/>
</dbReference>
<dbReference type="GO" id="GO:1901800">
    <property type="term" value="P:positive regulation of proteasomal protein catabolic process"/>
    <property type="evidence" value="ECO:0000315"/>
    <property type="project" value="ARUK-UCL"/>
</dbReference>
<dbReference type="GO" id="GO:1903078">
    <property type="term" value="P:positive regulation of protein localization to plasma membrane"/>
    <property type="evidence" value="ECO:0007669"/>
    <property type="project" value="Ensembl"/>
</dbReference>
<dbReference type="GO" id="GO:0050714">
    <property type="term" value="P:positive regulation of protein secretion"/>
    <property type="evidence" value="ECO:0007669"/>
    <property type="project" value="Ensembl"/>
</dbReference>
<dbReference type="GO" id="GO:1905808">
    <property type="term" value="P:positive regulation of synapse pruning"/>
    <property type="evidence" value="ECO:0000250"/>
    <property type="project" value="ARUK-UCL"/>
</dbReference>
<dbReference type="GO" id="GO:0032008">
    <property type="term" value="P:positive regulation of TOR signaling"/>
    <property type="evidence" value="ECO:0000316"/>
    <property type="project" value="ARUK-UCL"/>
</dbReference>
<dbReference type="GO" id="GO:0070269">
    <property type="term" value="P:pyroptotic inflammatory response"/>
    <property type="evidence" value="ECO:0000315"/>
    <property type="project" value="ARUK-UCL"/>
</dbReference>
<dbReference type="GO" id="GO:1900015">
    <property type="term" value="P:regulation of cytokine production involved in inflammatory response"/>
    <property type="evidence" value="ECO:0000315"/>
    <property type="project" value="ARUK-UCL"/>
</dbReference>
<dbReference type="GO" id="GO:0010468">
    <property type="term" value="P:regulation of gene expression"/>
    <property type="evidence" value="ECO:0000315"/>
    <property type="project" value="UniProtKB"/>
</dbReference>
<dbReference type="GO" id="GO:0110089">
    <property type="term" value="P:regulation of hippocampal neuron apoptotic process"/>
    <property type="evidence" value="ECO:0000315"/>
    <property type="project" value="ARUK-UCL"/>
</dbReference>
<dbReference type="GO" id="GO:0045088">
    <property type="term" value="P:regulation of innate immune response"/>
    <property type="evidence" value="ECO:0000315"/>
    <property type="project" value="UniProtKB"/>
</dbReference>
<dbReference type="GO" id="GO:0032675">
    <property type="term" value="P:regulation of interleukin-6 production"/>
    <property type="evidence" value="ECO:0000316"/>
    <property type="project" value="ARUK-UCL"/>
</dbReference>
<dbReference type="GO" id="GO:0019216">
    <property type="term" value="P:regulation of lipid metabolic process"/>
    <property type="evidence" value="ECO:0007669"/>
    <property type="project" value="Ensembl"/>
</dbReference>
<dbReference type="GO" id="GO:0071640">
    <property type="term" value="P:regulation of macrophage inflammatory protein 1 alpha production"/>
    <property type="evidence" value="ECO:0000316"/>
    <property type="project" value="ARUK-UCL"/>
</dbReference>
<dbReference type="GO" id="GO:1903376">
    <property type="term" value="P:regulation of oxidative stress-induced neuron intrinsic apoptotic signaling pathway"/>
    <property type="evidence" value="ECO:0000315"/>
    <property type="project" value="ARUK-UCL"/>
</dbReference>
<dbReference type="GO" id="GO:0120035">
    <property type="term" value="P:regulation of plasma membrane bounded cell projection organization"/>
    <property type="evidence" value="ECO:0000315"/>
    <property type="project" value="UniProtKB"/>
</dbReference>
<dbReference type="GO" id="GO:0060075">
    <property type="term" value="P:regulation of resting membrane potential"/>
    <property type="evidence" value="ECO:0000315"/>
    <property type="project" value="ARUK-UCL"/>
</dbReference>
<dbReference type="GO" id="GO:0034151">
    <property type="term" value="P:regulation of toll-like receptor 6 signaling pathway"/>
    <property type="evidence" value="ECO:0000315"/>
    <property type="project" value="ARUK-UCL"/>
</dbReference>
<dbReference type="GO" id="GO:0032006">
    <property type="term" value="P:regulation of TOR signaling"/>
    <property type="evidence" value="ECO:0000315"/>
    <property type="project" value="ARUK-UCL"/>
</dbReference>
<dbReference type="GO" id="GO:0045728">
    <property type="term" value="P:respiratory burst after phagocytosis"/>
    <property type="evidence" value="ECO:0000315"/>
    <property type="project" value="ARUK-UCL"/>
</dbReference>
<dbReference type="GO" id="GO:0048678">
    <property type="term" value="P:response to axon injury"/>
    <property type="evidence" value="ECO:0000315"/>
    <property type="project" value="ARUK-UCL"/>
</dbReference>
<dbReference type="GO" id="GO:0002931">
    <property type="term" value="P:response to ischemia"/>
    <property type="evidence" value="ECO:0000315"/>
    <property type="project" value="UniProtKB"/>
</dbReference>
<dbReference type="GO" id="GO:0071526">
    <property type="term" value="P:semaphorin-plexin signaling pathway"/>
    <property type="evidence" value="ECO:0000314"/>
    <property type="project" value="UniProtKB"/>
</dbReference>
<dbReference type="GO" id="GO:0035176">
    <property type="term" value="P:social behavior"/>
    <property type="evidence" value="ECO:0000315"/>
    <property type="project" value="ARUK-UCL"/>
</dbReference>
<dbReference type="GO" id="GO:0002291">
    <property type="term" value="P:T cell activation via T cell receptor contact with antigen bound to MHC molecule on antigen presenting cell"/>
    <property type="evidence" value="ECO:0000314"/>
    <property type="project" value="UniProtKB"/>
</dbReference>
<dbReference type="FunFam" id="2.60.40.10:FF:001076">
    <property type="entry name" value="Triggering receptor expressed on myeloid cells 2"/>
    <property type="match status" value="1"/>
</dbReference>
<dbReference type="Gene3D" id="2.60.40.10">
    <property type="entry name" value="Immunoglobulins"/>
    <property type="match status" value="1"/>
</dbReference>
<dbReference type="InterPro" id="IPR036179">
    <property type="entry name" value="Ig-like_dom_sf"/>
</dbReference>
<dbReference type="InterPro" id="IPR013783">
    <property type="entry name" value="Ig-like_fold"/>
</dbReference>
<dbReference type="InterPro" id="IPR003599">
    <property type="entry name" value="Ig_sub"/>
</dbReference>
<dbReference type="InterPro" id="IPR013106">
    <property type="entry name" value="Ig_V-set"/>
</dbReference>
<dbReference type="InterPro" id="IPR052314">
    <property type="entry name" value="Immune_rcpt_domain"/>
</dbReference>
<dbReference type="PANTHER" id="PTHR16423:SF11">
    <property type="entry name" value="IG-LIKE DOMAIN-CONTAINING PROTEIN"/>
    <property type="match status" value="1"/>
</dbReference>
<dbReference type="PANTHER" id="PTHR16423">
    <property type="entry name" value="TREM-LIKE TRANSCRIPT PROTEIN"/>
    <property type="match status" value="1"/>
</dbReference>
<dbReference type="Pfam" id="PF07686">
    <property type="entry name" value="V-set"/>
    <property type="match status" value="1"/>
</dbReference>
<dbReference type="SMART" id="SM00409">
    <property type="entry name" value="IG"/>
    <property type="match status" value="1"/>
</dbReference>
<dbReference type="SUPFAM" id="SSF48726">
    <property type="entry name" value="Immunoglobulin"/>
    <property type="match status" value="1"/>
</dbReference>
<keyword id="KW-0025">Alternative splicing</keyword>
<keyword id="KW-1003">Cell membrane</keyword>
<keyword id="KW-1015">Disulfide bond</keyword>
<keyword id="KW-0325">Glycoprotein</keyword>
<keyword id="KW-0393">Immunoglobulin domain</keyword>
<keyword id="KW-0446">Lipid-binding</keyword>
<keyword id="KW-0472">Membrane</keyword>
<keyword id="KW-0675">Receptor</keyword>
<keyword id="KW-1185">Reference proteome</keyword>
<keyword id="KW-0964">Secreted</keyword>
<keyword id="KW-0732">Signal</keyword>
<keyword id="KW-0812">Transmembrane</keyword>
<keyword id="KW-1133">Transmembrane helix</keyword>
<gene>
    <name type="primary">Trem2</name>
    <name type="synonym">Trem2a</name>
    <name type="synonym">Trem2b</name>
    <name type="synonym">Trem2c</name>
</gene>
<proteinExistence type="evidence at protein level"/>